<reference key="1">
    <citation type="journal article" date="2006" name="J. Bacteriol.">
        <title>Comparative genomic evidence for a close relationship between the dimorphic prosthecate bacteria Hyphomonas neptunium and Caulobacter crescentus.</title>
        <authorList>
            <person name="Badger J.H."/>
            <person name="Hoover T.R."/>
            <person name="Brun Y.V."/>
            <person name="Weiner R.M."/>
            <person name="Laub M.T."/>
            <person name="Alexandre G."/>
            <person name="Mrazek J."/>
            <person name="Ren Q."/>
            <person name="Paulsen I.T."/>
            <person name="Nelson K.E."/>
            <person name="Khouri H.M."/>
            <person name="Radune D."/>
            <person name="Sosa J."/>
            <person name="Dodson R.J."/>
            <person name="Sullivan S.A."/>
            <person name="Rosovitz M.J."/>
            <person name="Madupu R."/>
            <person name="Brinkac L.M."/>
            <person name="Durkin A.S."/>
            <person name="Daugherty S.C."/>
            <person name="Kothari S.P."/>
            <person name="Giglio M.G."/>
            <person name="Zhou L."/>
            <person name="Haft D.H."/>
            <person name="Selengut J.D."/>
            <person name="Davidsen T.M."/>
            <person name="Yang Q."/>
            <person name="Zafar N."/>
            <person name="Ward N.L."/>
        </authorList>
    </citation>
    <scope>NUCLEOTIDE SEQUENCE [LARGE SCALE GENOMIC DNA]</scope>
    <source>
        <strain>ATCC 15444</strain>
    </source>
</reference>
<gene>
    <name evidence="2" type="primary">tuf2</name>
    <name type="ordered locus">HNE_2853</name>
</gene>
<sequence length="396" mass="43208">MGKAKFERNKPHVNIGTIGHVDHGKTTLTAAITITLAKTGGATAKNYADIDAAPEEKARGITINTAHVEYETPARHYAHVDCPGHADYVKNMITGAAQMDGAILVCSAADGPMPQTREHILLARQVGVPALVVFLNKVDMVDDEELLELVEMEVRELLSSYNFPGDDIPIIKGSALAAVEDRNPEIGQDRILELMKAVDEYIPTPERPLDKPFLMPVEDVFSISGRGTVVTGRVEQGIVKVGEEIEIVGIRPTVKTTCTGVEMFRKLLDQGQAGDNIGALLRGVDREGVERGQVLCKPGSITPHTLFEAEAYILTKEEGGRHTPFFTNYRPQFYFRTTDVTGIVKLPEDKEMVLPGDNVKMDVELINPIAMDKGLRFAIREGGRTVGAGVVSEIKK</sequence>
<organism>
    <name type="scientific">Hyphomonas neptunium (strain ATCC 15444)</name>
    <dbReference type="NCBI Taxonomy" id="228405"/>
    <lineage>
        <taxon>Bacteria</taxon>
        <taxon>Pseudomonadati</taxon>
        <taxon>Pseudomonadota</taxon>
        <taxon>Alphaproteobacteria</taxon>
        <taxon>Hyphomonadales</taxon>
        <taxon>Hyphomonadaceae</taxon>
        <taxon>Hyphomonas</taxon>
    </lineage>
</organism>
<protein>
    <recommendedName>
        <fullName evidence="2">Elongation factor Tu 2</fullName>
        <shortName evidence="2">EF-Tu 2</shortName>
        <ecNumber evidence="2">3.6.5.3</ecNumber>
    </recommendedName>
</protein>
<feature type="chain" id="PRO_0000337407" description="Elongation factor Tu 2">
    <location>
        <begin position="1"/>
        <end position="396"/>
    </location>
</feature>
<feature type="domain" description="tr-type G">
    <location>
        <begin position="10"/>
        <end position="206"/>
    </location>
</feature>
<feature type="region of interest" description="G1" evidence="1">
    <location>
        <begin position="19"/>
        <end position="26"/>
    </location>
</feature>
<feature type="region of interest" description="G2" evidence="1">
    <location>
        <begin position="60"/>
        <end position="64"/>
    </location>
</feature>
<feature type="region of interest" description="G3" evidence="1">
    <location>
        <begin position="81"/>
        <end position="84"/>
    </location>
</feature>
<feature type="region of interest" description="G4" evidence="1">
    <location>
        <begin position="136"/>
        <end position="139"/>
    </location>
</feature>
<feature type="region of interest" description="G5" evidence="1">
    <location>
        <begin position="174"/>
        <end position="176"/>
    </location>
</feature>
<feature type="binding site" evidence="2">
    <location>
        <begin position="19"/>
        <end position="26"/>
    </location>
    <ligand>
        <name>GTP</name>
        <dbReference type="ChEBI" id="CHEBI:37565"/>
    </ligand>
</feature>
<feature type="binding site" evidence="2">
    <location>
        <position position="26"/>
    </location>
    <ligand>
        <name>Mg(2+)</name>
        <dbReference type="ChEBI" id="CHEBI:18420"/>
    </ligand>
</feature>
<feature type="binding site" evidence="2">
    <location>
        <begin position="81"/>
        <end position="85"/>
    </location>
    <ligand>
        <name>GTP</name>
        <dbReference type="ChEBI" id="CHEBI:37565"/>
    </ligand>
</feature>
<feature type="binding site" evidence="2">
    <location>
        <begin position="136"/>
        <end position="139"/>
    </location>
    <ligand>
        <name>GTP</name>
        <dbReference type="ChEBI" id="CHEBI:37565"/>
    </ligand>
</feature>
<keyword id="KW-0963">Cytoplasm</keyword>
<keyword id="KW-0251">Elongation factor</keyword>
<keyword id="KW-0342">GTP-binding</keyword>
<keyword id="KW-0378">Hydrolase</keyword>
<keyword id="KW-0460">Magnesium</keyword>
<keyword id="KW-0479">Metal-binding</keyword>
<keyword id="KW-0547">Nucleotide-binding</keyword>
<keyword id="KW-0648">Protein biosynthesis</keyword>
<keyword id="KW-1185">Reference proteome</keyword>
<name>EFTU2_HYPNA</name>
<evidence type="ECO:0000250" key="1"/>
<evidence type="ECO:0000255" key="2">
    <source>
        <dbReference type="HAMAP-Rule" id="MF_00118"/>
    </source>
</evidence>
<dbReference type="EC" id="3.6.5.3" evidence="2"/>
<dbReference type="EMBL" id="CP000158">
    <property type="protein sequence ID" value="ABI77727.1"/>
    <property type="molecule type" value="Genomic_DNA"/>
</dbReference>
<dbReference type="RefSeq" id="WP_011647828.1">
    <property type="nucleotide sequence ID" value="NC_008358.1"/>
</dbReference>
<dbReference type="SMR" id="Q0BYB2"/>
<dbReference type="STRING" id="228405.HNE_2853"/>
<dbReference type="KEGG" id="hne:HNE_2853"/>
<dbReference type="eggNOG" id="COG0050">
    <property type="taxonomic scope" value="Bacteria"/>
</dbReference>
<dbReference type="HOGENOM" id="CLU_007265_0_0_5"/>
<dbReference type="Proteomes" id="UP000001959">
    <property type="component" value="Chromosome"/>
</dbReference>
<dbReference type="GO" id="GO:0005829">
    <property type="term" value="C:cytosol"/>
    <property type="evidence" value="ECO:0007669"/>
    <property type="project" value="TreeGrafter"/>
</dbReference>
<dbReference type="GO" id="GO:0005525">
    <property type="term" value="F:GTP binding"/>
    <property type="evidence" value="ECO:0007669"/>
    <property type="project" value="UniProtKB-UniRule"/>
</dbReference>
<dbReference type="GO" id="GO:0003924">
    <property type="term" value="F:GTPase activity"/>
    <property type="evidence" value="ECO:0007669"/>
    <property type="project" value="InterPro"/>
</dbReference>
<dbReference type="GO" id="GO:0097216">
    <property type="term" value="F:guanosine tetraphosphate binding"/>
    <property type="evidence" value="ECO:0007669"/>
    <property type="project" value="UniProtKB-ARBA"/>
</dbReference>
<dbReference type="GO" id="GO:0003746">
    <property type="term" value="F:translation elongation factor activity"/>
    <property type="evidence" value="ECO:0007669"/>
    <property type="project" value="UniProtKB-UniRule"/>
</dbReference>
<dbReference type="CDD" id="cd01884">
    <property type="entry name" value="EF_Tu"/>
    <property type="match status" value="1"/>
</dbReference>
<dbReference type="CDD" id="cd03697">
    <property type="entry name" value="EFTU_II"/>
    <property type="match status" value="1"/>
</dbReference>
<dbReference type="CDD" id="cd03707">
    <property type="entry name" value="EFTU_III"/>
    <property type="match status" value="1"/>
</dbReference>
<dbReference type="FunFam" id="2.40.30.10:FF:000001">
    <property type="entry name" value="Elongation factor Tu"/>
    <property type="match status" value="1"/>
</dbReference>
<dbReference type="FunFam" id="3.40.50.300:FF:000003">
    <property type="entry name" value="Elongation factor Tu"/>
    <property type="match status" value="1"/>
</dbReference>
<dbReference type="Gene3D" id="3.40.50.300">
    <property type="entry name" value="P-loop containing nucleotide triphosphate hydrolases"/>
    <property type="match status" value="1"/>
</dbReference>
<dbReference type="Gene3D" id="2.40.30.10">
    <property type="entry name" value="Translation factors"/>
    <property type="match status" value="2"/>
</dbReference>
<dbReference type="HAMAP" id="MF_00118_B">
    <property type="entry name" value="EF_Tu_B"/>
    <property type="match status" value="1"/>
</dbReference>
<dbReference type="InterPro" id="IPR041709">
    <property type="entry name" value="EF-Tu_GTP-bd"/>
</dbReference>
<dbReference type="InterPro" id="IPR050055">
    <property type="entry name" value="EF-Tu_GTPase"/>
</dbReference>
<dbReference type="InterPro" id="IPR004161">
    <property type="entry name" value="EFTu-like_2"/>
</dbReference>
<dbReference type="InterPro" id="IPR033720">
    <property type="entry name" value="EFTU_2"/>
</dbReference>
<dbReference type="InterPro" id="IPR031157">
    <property type="entry name" value="G_TR_CS"/>
</dbReference>
<dbReference type="InterPro" id="IPR027417">
    <property type="entry name" value="P-loop_NTPase"/>
</dbReference>
<dbReference type="InterPro" id="IPR005225">
    <property type="entry name" value="Small_GTP-bd"/>
</dbReference>
<dbReference type="InterPro" id="IPR000795">
    <property type="entry name" value="T_Tr_GTP-bd_dom"/>
</dbReference>
<dbReference type="InterPro" id="IPR009000">
    <property type="entry name" value="Transl_B-barrel_sf"/>
</dbReference>
<dbReference type="InterPro" id="IPR009001">
    <property type="entry name" value="Transl_elong_EF1A/Init_IF2_C"/>
</dbReference>
<dbReference type="InterPro" id="IPR004541">
    <property type="entry name" value="Transl_elong_EFTu/EF1A_bac/org"/>
</dbReference>
<dbReference type="InterPro" id="IPR004160">
    <property type="entry name" value="Transl_elong_EFTu/EF1A_C"/>
</dbReference>
<dbReference type="NCBIfam" id="TIGR00485">
    <property type="entry name" value="EF-Tu"/>
    <property type="match status" value="1"/>
</dbReference>
<dbReference type="NCBIfam" id="NF000766">
    <property type="entry name" value="PRK00049.1"/>
    <property type="match status" value="1"/>
</dbReference>
<dbReference type="NCBIfam" id="NF009372">
    <property type="entry name" value="PRK12735.1"/>
    <property type="match status" value="1"/>
</dbReference>
<dbReference type="NCBIfam" id="NF009373">
    <property type="entry name" value="PRK12736.1"/>
    <property type="match status" value="1"/>
</dbReference>
<dbReference type="NCBIfam" id="TIGR00231">
    <property type="entry name" value="small_GTP"/>
    <property type="match status" value="1"/>
</dbReference>
<dbReference type="PANTHER" id="PTHR43721:SF22">
    <property type="entry name" value="ELONGATION FACTOR TU, MITOCHONDRIAL"/>
    <property type="match status" value="1"/>
</dbReference>
<dbReference type="PANTHER" id="PTHR43721">
    <property type="entry name" value="ELONGATION FACTOR TU-RELATED"/>
    <property type="match status" value="1"/>
</dbReference>
<dbReference type="Pfam" id="PF00009">
    <property type="entry name" value="GTP_EFTU"/>
    <property type="match status" value="1"/>
</dbReference>
<dbReference type="Pfam" id="PF03144">
    <property type="entry name" value="GTP_EFTU_D2"/>
    <property type="match status" value="1"/>
</dbReference>
<dbReference type="Pfam" id="PF03143">
    <property type="entry name" value="GTP_EFTU_D3"/>
    <property type="match status" value="1"/>
</dbReference>
<dbReference type="PRINTS" id="PR00315">
    <property type="entry name" value="ELONGATNFCT"/>
</dbReference>
<dbReference type="SUPFAM" id="SSF50465">
    <property type="entry name" value="EF-Tu/eEF-1alpha/eIF2-gamma C-terminal domain"/>
    <property type="match status" value="1"/>
</dbReference>
<dbReference type="SUPFAM" id="SSF52540">
    <property type="entry name" value="P-loop containing nucleoside triphosphate hydrolases"/>
    <property type="match status" value="1"/>
</dbReference>
<dbReference type="SUPFAM" id="SSF50447">
    <property type="entry name" value="Translation proteins"/>
    <property type="match status" value="1"/>
</dbReference>
<dbReference type="PROSITE" id="PS00301">
    <property type="entry name" value="G_TR_1"/>
    <property type="match status" value="1"/>
</dbReference>
<dbReference type="PROSITE" id="PS51722">
    <property type="entry name" value="G_TR_2"/>
    <property type="match status" value="1"/>
</dbReference>
<accession>Q0BYB2</accession>
<comment type="function">
    <text evidence="2">GTP hydrolase that promotes the GTP-dependent binding of aminoacyl-tRNA to the A-site of ribosomes during protein biosynthesis.</text>
</comment>
<comment type="catalytic activity">
    <reaction evidence="2">
        <text>GTP + H2O = GDP + phosphate + H(+)</text>
        <dbReference type="Rhea" id="RHEA:19669"/>
        <dbReference type="ChEBI" id="CHEBI:15377"/>
        <dbReference type="ChEBI" id="CHEBI:15378"/>
        <dbReference type="ChEBI" id="CHEBI:37565"/>
        <dbReference type="ChEBI" id="CHEBI:43474"/>
        <dbReference type="ChEBI" id="CHEBI:58189"/>
        <dbReference type="EC" id="3.6.5.3"/>
    </reaction>
    <physiologicalReaction direction="left-to-right" evidence="2">
        <dbReference type="Rhea" id="RHEA:19670"/>
    </physiologicalReaction>
</comment>
<comment type="subunit">
    <text evidence="2">Monomer.</text>
</comment>
<comment type="subcellular location">
    <subcellularLocation>
        <location evidence="2">Cytoplasm</location>
    </subcellularLocation>
</comment>
<comment type="similarity">
    <text evidence="2">Belongs to the TRAFAC class translation factor GTPase superfamily. Classic translation factor GTPase family. EF-Tu/EF-1A subfamily.</text>
</comment>
<proteinExistence type="inferred from homology"/>